<evidence type="ECO:0000255" key="1">
    <source>
        <dbReference type="HAMAP-Rule" id="MF_00639"/>
    </source>
</evidence>
<sequence length="442" mass="48773">MSSESLTVIVGLGKTGLSCAQFLAAKNQPFAVMDSREEPPEWENFIKTYPRVELIRGQFSEKLLNEAQEIILSPGVSLQEPLIAKQAAQGKSIIGDIELFARNVNKPIIAITGSNGKTTVTTVVGLMMKAAGRNVSVCGNIGEPVLEQITPEPDYYVLELSSFQLETTFSLRSQAATILNISEDHMNRYATLQDYLRAKQRIYTDCFIPIVNADEPEIWRHLPFNKKPLSFGLNNAADFSLAEHNQKTSIAYQGKILMPIQELKLNARHHLQNALAALALGTAAKIPIENMLHVLRDFSGIRHRCQWVRKYKEIDYYNDSKGTNVGATRAAIESLGQAAKGQLILIAGGQGKGADFSPLKDVVKRYVKQVILIGEDAPLLEKTLKEITVIKHADSMNEAVKRSTQAAKAGDIVLLSPACASFDMFTNYEHRGDVFTETVEAL</sequence>
<dbReference type="EC" id="6.3.2.9" evidence="1"/>
<dbReference type="EMBL" id="CP000890">
    <property type="protein sequence ID" value="ABX78044.1"/>
    <property type="molecule type" value="Genomic_DNA"/>
</dbReference>
<dbReference type="RefSeq" id="WP_010957395.1">
    <property type="nucleotide sequence ID" value="NC_010117.1"/>
</dbReference>
<dbReference type="SMR" id="A9NA40"/>
<dbReference type="KEGG" id="cbs:COXBURSA331_A0221"/>
<dbReference type="HOGENOM" id="CLU_032540_1_0_6"/>
<dbReference type="UniPathway" id="UPA00219"/>
<dbReference type="GO" id="GO:0005737">
    <property type="term" value="C:cytoplasm"/>
    <property type="evidence" value="ECO:0007669"/>
    <property type="project" value="UniProtKB-SubCell"/>
</dbReference>
<dbReference type="GO" id="GO:0005524">
    <property type="term" value="F:ATP binding"/>
    <property type="evidence" value="ECO:0007669"/>
    <property type="project" value="UniProtKB-UniRule"/>
</dbReference>
<dbReference type="GO" id="GO:0008764">
    <property type="term" value="F:UDP-N-acetylmuramoylalanine-D-glutamate ligase activity"/>
    <property type="evidence" value="ECO:0007669"/>
    <property type="project" value="UniProtKB-UniRule"/>
</dbReference>
<dbReference type="GO" id="GO:0051301">
    <property type="term" value="P:cell division"/>
    <property type="evidence" value="ECO:0007669"/>
    <property type="project" value="UniProtKB-KW"/>
</dbReference>
<dbReference type="GO" id="GO:0071555">
    <property type="term" value="P:cell wall organization"/>
    <property type="evidence" value="ECO:0007669"/>
    <property type="project" value="UniProtKB-KW"/>
</dbReference>
<dbReference type="GO" id="GO:0009252">
    <property type="term" value="P:peptidoglycan biosynthetic process"/>
    <property type="evidence" value="ECO:0007669"/>
    <property type="project" value="UniProtKB-UniRule"/>
</dbReference>
<dbReference type="GO" id="GO:0008360">
    <property type="term" value="P:regulation of cell shape"/>
    <property type="evidence" value="ECO:0007669"/>
    <property type="project" value="UniProtKB-KW"/>
</dbReference>
<dbReference type="Gene3D" id="3.90.190.20">
    <property type="entry name" value="Mur ligase, C-terminal domain"/>
    <property type="match status" value="1"/>
</dbReference>
<dbReference type="Gene3D" id="3.40.1190.10">
    <property type="entry name" value="Mur-like, catalytic domain"/>
    <property type="match status" value="1"/>
</dbReference>
<dbReference type="Gene3D" id="3.40.50.720">
    <property type="entry name" value="NAD(P)-binding Rossmann-like Domain"/>
    <property type="match status" value="1"/>
</dbReference>
<dbReference type="HAMAP" id="MF_00639">
    <property type="entry name" value="MurD"/>
    <property type="match status" value="1"/>
</dbReference>
<dbReference type="InterPro" id="IPR036565">
    <property type="entry name" value="Mur-like_cat_sf"/>
</dbReference>
<dbReference type="InterPro" id="IPR004101">
    <property type="entry name" value="Mur_ligase_C"/>
</dbReference>
<dbReference type="InterPro" id="IPR036615">
    <property type="entry name" value="Mur_ligase_C_dom_sf"/>
</dbReference>
<dbReference type="InterPro" id="IPR013221">
    <property type="entry name" value="Mur_ligase_cen"/>
</dbReference>
<dbReference type="InterPro" id="IPR005762">
    <property type="entry name" value="MurD"/>
</dbReference>
<dbReference type="NCBIfam" id="TIGR01087">
    <property type="entry name" value="murD"/>
    <property type="match status" value="1"/>
</dbReference>
<dbReference type="PANTHER" id="PTHR43692">
    <property type="entry name" value="UDP-N-ACETYLMURAMOYLALANINE--D-GLUTAMATE LIGASE"/>
    <property type="match status" value="1"/>
</dbReference>
<dbReference type="PANTHER" id="PTHR43692:SF1">
    <property type="entry name" value="UDP-N-ACETYLMURAMOYLALANINE--D-GLUTAMATE LIGASE"/>
    <property type="match status" value="1"/>
</dbReference>
<dbReference type="Pfam" id="PF02875">
    <property type="entry name" value="Mur_ligase_C"/>
    <property type="match status" value="1"/>
</dbReference>
<dbReference type="Pfam" id="PF08245">
    <property type="entry name" value="Mur_ligase_M"/>
    <property type="match status" value="1"/>
</dbReference>
<dbReference type="Pfam" id="PF21799">
    <property type="entry name" value="MurD-like_N"/>
    <property type="match status" value="1"/>
</dbReference>
<dbReference type="SUPFAM" id="SSF51984">
    <property type="entry name" value="MurCD N-terminal domain"/>
    <property type="match status" value="1"/>
</dbReference>
<dbReference type="SUPFAM" id="SSF53623">
    <property type="entry name" value="MurD-like peptide ligases, catalytic domain"/>
    <property type="match status" value="1"/>
</dbReference>
<dbReference type="SUPFAM" id="SSF53244">
    <property type="entry name" value="MurD-like peptide ligases, peptide-binding domain"/>
    <property type="match status" value="1"/>
</dbReference>
<keyword id="KW-0067">ATP-binding</keyword>
<keyword id="KW-0131">Cell cycle</keyword>
<keyword id="KW-0132">Cell division</keyword>
<keyword id="KW-0133">Cell shape</keyword>
<keyword id="KW-0961">Cell wall biogenesis/degradation</keyword>
<keyword id="KW-0963">Cytoplasm</keyword>
<keyword id="KW-0436">Ligase</keyword>
<keyword id="KW-0547">Nucleotide-binding</keyword>
<keyword id="KW-0573">Peptidoglycan synthesis</keyword>
<gene>
    <name evidence="1" type="primary">murD</name>
    <name type="ordered locus">COXBURSA331_A0221</name>
</gene>
<accession>A9NA40</accession>
<protein>
    <recommendedName>
        <fullName evidence="1">UDP-N-acetylmuramoylalanine--D-glutamate ligase</fullName>
        <ecNumber evidence="1">6.3.2.9</ecNumber>
    </recommendedName>
    <alternativeName>
        <fullName evidence="1">D-glutamic acid-adding enzyme</fullName>
    </alternativeName>
    <alternativeName>
        <fullName evidence="1">UDP-N-acetylmuramoyl-L-alanyl-D-glutamate synthetase</fullName>
    </alternativeName>
</protein>
<feature type="chain" id="PRO_1000082682" description="UDP-N-acetylmuramoylalanine--D-glutamate ligase">
    <location>
        <begin position="1"/>
        <end position="442"/>
    </location>
</feature>
<feature type="binding site" evidence="1">
    <location>
        <begin position="113"/>
        <end position="119"/>
    </location>
    <ligand>
        <name>ATP</name>
        <dbReference type="ChEBI" id="CHEBI:30616"/>
    </ligand>
</feature>
<comment type="function">
    <text evidence="1">Cell wall formation. Catalyzes the addition of glutamate to the nucleotide precursor UDP-N-acetylmuramoyl-L-alanine (UMA).</text>
</comment>
<comment type="catalytic activity">
    <reaction evidence="1">
        <text>UDP-N-acetyl-alpha-D-muramoyl-L-alanine + D-glutamate + ATP = UDP-N-acetyl-alpha-D-muramoyl-L-alanyl-D-glutamate + ADP + phosphate + H(+)</text>
        <dbReference type="Rhea" id="RHEA:16429"/>
        <dbReference type="ChEBI" id="CHEBI:15378"/>
        <dbReference type="ChEBI" id="CHEBI:29986"/>
        <dbReference type="ChEBI" id="CHEBI:30616"/>
        <dbReference type="ChEBI" id="CHEBI:43474"/>
        <dbReference type="ChEBI" id="CHEBI:83898"/>
        <dbReference type="ChEBI" id="CHEBI:83900"/>
        <dbReference type="ChEBI" id="CHEBI:456216"/>
        <dbReference type="EC" id="6.3.2.9"/>
    </reaction>
</comment>
<comment type="pathway">
    <text evidence="1">Cell wall biogenesis; peptidoglycan biosynthesis.</text>
</comment>
<comment type="subcellular location">
    <subcellularLocation>
        <location evidence="1">Cytoplasm</location>
    </subcellularLocation>
</comment>
<comment type="similarity">
    <text evidence="1">Belongs to the MurCDEF family.</text>
</comment>
<proteinExistence type="inferred from homology"/>
<name>MURD_COXBR</name>
<organism>
    <name type="scientific">Coxiella burnetii (strain RSA 331 / Henzerling II)</name>
    <dbReference type="NCBI Taxonomy" id="360115"/>
    <lineage>
        <taxon>Bacteria</taxon>
        <taxon>Pseudomonadati</taxon>
        <taxon>Pseudomonadota</taxon>
        <taxon>Gammaproteobacteria</taxon>
        <taxon>Legionellales</taxon>
        <taxon>Coxiellaceae</taxon>
        <taxon>Coxiella</taxon>
    </lineage>
</organism>
<reference key="1">
    <citation type="submission" date="2007-11" db="EMBL/GenBank/DDBJ databases">
        <title>Genome sequencing of phylogenetically and phenotypically diverse Coxiella burnetii isolates.</title>
        <authorList>
            <person name="Seshadri R."/>
            <person name="Samuel J.E."/>
        </authorList>
    </citation>
    <scope>NUCLEOTIDE SEQUENCE [LARGE SCALE GENOMIC DNA]</scope>
    <source>
        <strain>RSA 331 / Henzerling II</strain>
    </source>
</reference>